<name>RF3_FRATN</name>
<sequence>MSEYLQQIAKRRTFAIISHPDAGKTTITEKMLLFGNAIKTAGTVKAKKSGIHATSDWMEMEKQRGISITTSVMQFPYNGRIINLLDTPGHEDFSEDTYRTLTAVDSALMVVDAVKGVEDRTIKLMNVCRLRDTPIVTFMNKFDRDTRDPLELLDEVENILKIKCAPMNWPIGMGKYFKGVYDLYNDEVTLFETGHGHEIYPYKKIKGLANAKDAIGIDLYEDLEMEIDLVRGASHEFDEQEFLEGNLTPVYFGTALSNFGVKEMMDGFTRYAPAPQHREADQRVVAADEQKLTGFVFKIQANMDEKHRDRIAFFRICSGKYEKGMKIFHERTGKQMQISKALTFMAGEREQVEEGYAGDIIGFHNHGSIQIGDSFTQGEKLKFKGIPNFAPEIFKRVKLNDPLKMKALQKGLVQLSEEGATQVFKPFISNDLVLGAVGVLQFDVVAQRLASEYNVKCSYEGVNVTLARWIFCNDEKKLNDFKKKYEVNLAYDGAGYLTYLAPTGVNLQLAQEKNPDIIFSATREH</sequence>
<accession>A0Q892</accession>
<gene>
    <name evidence="1" type="primary">prfC</name>
    <name type="ordered locus">FTN_1597</name>
</gene>
<comment type="function">
    <text evidence="1">Increases the formation of ribosomal termination complexes and stimulates activities of RF-1 and RF-2. It binds guanine nucleotides and has strong preference for UGA stop codons. It may interact directly with the ribosome. The stimulation of RF-1 and RF-2 is significantly reduced by GTP and GDP, but not by GMP.</text>
</comment>
<comment type="subcellular location">
    <subcellularLocation>
        <location evidence="1">Cytoplasm</location>
    </subcellularLocation>
</comment>
<comment type="similarity">
    <text evidence="1">Belongs to the TRAFAC class translation factor GTPase superfamily. Classic translation factor GTPase family. PrfC subfamily.</text>
</comment>
<proteinExistence type="inferred from homology"/>
<organism>
    <name type="scientific">Francisella tularensis subsp. novicida (strain U112)</name>
    <dbReference type="NCBI Taxonomy" id="401614"/>
    <lineage>
        <taxon>Bacteria</taxon>
        <taxon>Pseudomonadati</taxon>
        <taxon>Pseudomonadota</taxon>
        <taxon>Gammaproteobacteria</taxon>
        <taxon>Thiotrichales</taxon>
        <taxon>Francisellaceae</taxon>
        <taxon>Francisella</taxon>
    </lineage>
</organism>
<dbReference type="EMBL" id="CP000439">
    <property type="protein sequence ID" value="ABK90457.1"/>
    <property type="molecule type" value="Genomic_DNA"/>
</dbReference>
<dbReference type="RefSeq" id="WP_003041145.1">
    <property type="nucleotide sequence ID" value="NC_008601.1"/>
</dbReference>
<dbReference type="SMR" id="A0Q892"/>
<dbReference type="KEGG" id="ftn:FTN_1597"/>
<dbReference type="KEGG" id="ftx:AW25_400"/>
<dbReference type="BioCyc" id="FTUL401614:G1G75-1649-MONOMER"/>
<dbReference type="Proteomes" id="UP000000762">
    <property type="component" value="Chromosome"/>
</dbReference>
<dbReference type="GO" id="GO:0005829">
    <property type="term" value="C:cytosol"/>
    <property type="evidence" value="ECO:0007669"/>
    <property type="project" value="TreeGrafter"/>
</dbReference>
<dbReference type="GO" id="GO:0005525">
    <property type="term" value="F:GTP binding"/>
    <property type="evidence" value="ECO:0007669"/>
    <property type="project" value="UniProtKB-UniRule"/>
</dbReference>
<dbReference type="GO" id="GO:0003924">
    <property type="term" value="F:GTPase activity"/>
    <property type="evidence" value="ECO:0007669"/>
    <property type="project" value="InterPro"/>
</dbReference>
<dbReference type="GO" id="GO:0097216">
    <property type="term" value="F:guanosine tetraphosphate binding"/>
    <property type="evidence" value="ECO:0007669"/>
    <property type="project" value="UniProtKB-ARBA"/>
</dbReference>
<dbReference type="GO" id="GO:0016150">
    <property type="term" value="F:translation release factor activity, codon nonspecific"/>
    <property type="evidence" value="ECO:0007669"/>
    <property type="project" value="TreeGrafter"/>
</dbReference>
<dbReference type="GO" id="GO:0016149">
    <property type="term" value="F:translation release factor activity, codon specific"/>
    <property type="evidence" value="ECO:0007669"/>
    <property type="project" value="UniProtKB-UniRule"/>
</dbReference>
<dbReference type="GO" id="GO:0006449">
    <property type="term" value="P:regulation of translational termination"/>
    <property type="evidence" value="ECO:0007669"/>
    <property type="project" value="UniProtKB-UniRule"/>
</dbReference>
<dbReference type="CDD" id="cd04169">
    <property type="entry name" value="RF3"/>
    <property type="match status" value="1"/>
</dbReference>
<dbReference type="CDD" id="cd03689">
    <property type="entry name" value="RF3_II"/>
    <property type="match status" value="1"/>
</dbReference>
<dbReference type="CDD" id="cd16259">
    <property type="entry name" value="RF3_III"/>
    <property type="match status" value="1"/>
</dbReference>
<dbReference type="FunFam" id="2.40.30.10:FF:000040">
    <property type="entry name" value="Peptide chain release factor 3"/>
    <property type="match status" value="1"/>
</dbReference>
<dbReference type="FunFam" id="3.30.70.3280:FF:000001">
    <property type="entry name" value="Peptide chain release factor 3"/>
    <property type="match status" value="1"/>
</dbReference>
<dbReference type="FunFam" id="3.40.50.300:FF:000542">
    <property type="entry name" value="Peptide chain release factor 3"/>
    <property type="match status" value="1"/>
</dbReference>
<dbReference type="Gene3D" id="3.40.50.300">
    <property type="entry name" value="P-loop containing nucleotide triphosphate hydrolases"/>
    <property type="match status" value="1"/>
</dbReference>
<dbReference type="Gene3D" id="3.30.70.3280">
    <property type="entry name" value="Peptide chain release factor 3, domain III"/>
    <property type="match status" value="1"/>
</dbReference>
<dbReference type="Gene3D" id="2.40.30.10">
    <property type="entry name" value="Translation factors"/>
    <property type="match status" value="1"/>
</dbReference>
<dbReference type="HAMAP" id="MF_00072">
    <property type="entry name" value="Rel_fac_3"/>
    <property type="match status" value="1"/>
</dbReference>
<dbReference type="InterPro" id="IPR053905">
    <property type="entry name" value="EF-G-like_DII"/>
</dbReference>
<dbReference type="InterPro" id="IPR035647">
    <property type="entry name" value="EFG_III/V"/>
</dbReference>
<dbReference type="InterPro" id="IPR031157">
    <property type="entry name" value="G_TR_CS"/>
</dbReference>
<dbReference type="InterPro" id="IPR027417">
    <property type="entry name" value="P-loop_NTPase"/>
</dbReference>
<dbReference type="InterPro" id="IPR004548">
    <property type="entry name" value="PrfC"/>
</dbReference>
<dbReference type="InterPro" id="IPR032090">
    <property type="entry name" value="RF3_C"/>
</dbReference>
<dbReference type="InterPro" id="IPR038467">
    <property type="entry name" value="RF3_dom_3_sf"/>
</dbReference>
<dbReference type="InterPro" id="IPR041732">
    <property type="entry name" value="RF3_GTP-bd"/>
</dbReference>
<dbReference type="InterPro" id="IPR005225">
    <property type="entry name" value="Small_GTP-bd"/>
</dbReference>
<dbReference type="InterPro" id="IPR000795">
    <property type="entry name" value="T_Tr_GTP-bd_dom"/>
</dbReference>
<dbReference type="InterPro" id="IPR009000">
    <property type="entry name" value="Transl_B-barrel_sf"/>
</dbReference>
<dbReference type="NCBIfam" id="TIGR00503">
    <property type="entry name" value="prfC"/>
    <property type="match status" value="1"/>
</dbReference>
<dbReference type="NCBIfam" id="NF001964">
    <property type="entry name" value="PRK00741.1"/>
    <property type="match status" value="1"/>
</dbReference>
<dbReference type="NCBIfam" id="TIGR00231">
    <property type="entry name" value="small_GTP"/>
    <property type="match status" value="1"/>
</dbReference>
<dbReference type="PANTHER" id="PTHR43556">
    <property type="entry name" value="PEPTIDE CHAIN RELEASE FACTOR RF3"/>
    <property type="match status" value="1"/>
</dbReference>
<dbReference type="PANTHER" id="PTHR43556:SF2">
    <property type="entry name" value="PEPTIDE CHAIN RELEASE FACTOR RF3"/>
    <property type="match status" value="1"/>
</dbReference>
<dbReference type="Pfam" id="PF22042">
    <property type="entry name" value="EF-G_D2"/>
    <property type="match status" value="1"/>
</dbReference>
<dbReference type="Pfam" id="PF00009">
    <property type="entry name" value="GTP_EFTU"/>
    <property type="match status" value="1"/>
</dbReference>
<dbReference type="Pfam" id="PF16658">
    <property type="entry name" value="RF3_C"/>
    <property type="match status" value="1"/>
</dbReference>
<dbReference type="PRINTS" id="PR00315">
    <property type="entry name" value="ELONGATNFCT"/>
</dbReference>
<dbReference type="SUPFAM" id="SSF54980">
    <property type="entry name" value="EF-G C-terminal domain-like"/>
    <property type="match status" value="1"/>
</dbReference>
<dbReference type="SUPFAM" id="SSF52540">
    <property type="entry name" value="P-loop containing nucleoside triphosphate hydrolases"/>
    <property type="match status" value="1"/>
</dbReference>
<dbReference type="SUPFAM" id="SSF50447">
    <property type="entry name" value="Translation proteins"/>
    <property type="match status" value="1"/>
</dbReference>
<dbReference type="PROSITE" id="PS00301">
    <property type="entry name" value="G_TR_1"/>
    <property type="match status" value="1"/>
</dbReference>
<dbReference type="PROSITE" id="PS51722">
    <property type="entry name" value="G_TR_2"/>
    <property type="match status" value="1"/>
</dbReference>
<protein>
    <recommendedName>
        <fullName evidence="1">Peptide chain release factor 3</fullName>
        <shortName evidence="1">RF-3</shortName>
    </recommendedName>
</protein>
<keyword id="KW-0963">Cytoplasm</keyword>
<keyword id="KW-0342">GTP-binding</keyword>
<keyword id="KW-0547">Nucleotide-binding</keyword>
<keyword id="KW-0648">Protein biosynthesis</keyword>
<reference key="1">
    <citation type="journal article" date="2007" name="Genome Biol.">
        <title>Comparison of Francisella tularensis genomes reveals evolutionary events associated with the emergence of human pathogenic strains.</title>
        <authorList>
            <person name="Rohmer L."/>
            <person name="Fong C."/>
            <person name="Abmayr S."/>
            <person name="Wasnick M."/>
            <person name="Larson Freeman T.J."/>
            <person name="Radey M."/>
            <person name="Guina T."/>
            <person name="Svensson K."/>
            <person name="Hayden H.S."/>
            <person name="Jacobs M."/>
            <person name="Gallagher L.A."/>
            <person name="Manoil C."/>
            <person name="Ernst R.K."/>
            <person name="Drees B."/>
            <person name="Buckley D."/>
            <person name="Haugen E."/>
            <person name="Bovee D."/>
            <person name="Zhou Y."/>
            <person name="Chang J."/>
            <person name="Levy R."/>
            <person name="Lim R."/>
            <person name="Gillett W."/>
            <person name="Guenthener D."/>
            <person name="Kang A."/>
            <person name="Shaffer S.A."/>
            <person name="Taylor G."/>
            <person name="Chen J."/>
            <person name="Gallis B."/>
            <person name="D'Argenio D.A."/>
            <person name="Forsman M."/>
            <person name="Olson M.V."/>
            <person name="Goodlett D.R."/>
            <person name="Kaul R."/>
            <person name="Miller S.I."/>
            <person name="Brittnacher M.J."/>
        </authorList>
    </citation>
    <scope>NUCLEOTIDE SEQUENCE [LARGE SCALE GENOMIC DNA]</scope>
    <source>
        <strain>U112</strain>
    </source>
</reference>
<evidence type="ECO:0000255" key="1">
    <source>
        <dbReference type="HAMAP-Rule" id="MF_00072"/>
    </source>
</evidence>
<feature type="chain" id="PRO_1000023647" description="Peptide chain release factor 3">
    <location>
        <begin position="1"/>
        <end position="525"/>
    </location>
</feature>
<feature type="domain" description="tr-type G">
    <location>
        <begin position="9"/>
        <end position="276"/>
    </location>
</feature>
<feature type="binding site" evidence="1">
    <location>
        <begin position="18"/>
        <end position="25"/>
    </location>
    <ligand>
        <name>GTP</name>
        <dbReference type="ChEBI" id="CHEBI:37565"/>
    </ligand>
</feature>
<feature type="binding site" evidence="1">
    <location>
        <begin position="86"/>
        <end position="90"/>
    </location>
    <ligand>
        <name>GTP</name>
        <dbReference type="ChEBI" id="CHEBI:37565"/>
    </ligand>
</feature>
<feature type="binding site" evidence="1">
    <location>
        <begin position="140"/>
        <end position="143"/>
    </location>
    <ligand>
        <name>GTP</name>
        <dbReference type="ChEBI" id="CHEBI:37565"/>
    </ligand>
</feature>